<name>CHEB2_ANADE</name>
<gene>
    <name evidence="1" type="primary">cheB2</name>
    <name type="ordered locus">Adeh_0614</name>
</gene>
<feature type="chain" id="PRO_0000264257" description="Protein-glutamate methylesterase/protein-glutamine glutaminase 2">
    <location>
        <begin position="1"/>
        <end position="341"/>
    </location>
</feature>
<feature type="domain" description="Response regulatory" evidence="1">
    <location>
        <begin position="11"/>
        <end position="126"/>
    </location>
</feature>
<feature type="domain" description="CheB-type methylesterase" evidence="1">
    <location>
        <begin position="152"/>
        <end position="341"/>
    </location>
</feature>
<feature type="active site" evidence="1">
    <location>
        <position position="166"/>
    </location>
</feature>
<feature type="active site" evidence="1">
    <location>
        <position position="193"/>
    </location>
</feature>
<feature type="active site" evidence="1">
    <location>
        <position position="285"/>
    </location>
</feature>
<feature type="modified residue" description="4-aspartylphosphate" evidence="1">
    <location>
        <position position="62"/>
    </location>
</feature>
<organism>
    <name type="scientific">Anaeromyxobacter dehalogenans (strain 2CP-C)</name>
    <dbReference type="NCBI Taxonomy" id="290397"/>
    <lineage>
        <taxon>Bacteria</taxon>
        <taxon>Pseudomonadati</taxon>
        <taxon>Myxococcota</taxon>
        <taxon>Myxococcia</taxon>
        <taxon>Myxococcales</taxon>
        <taxon>Cystobacterineae</taxon>
        <taxon>Anaeromyxobacteraceae</taxon>
        <taxon>Anaeromyxobacter</taxon>
    </lineage>
</organism>
<reference key="1">
    <citation type="submission" date="2006-01" db="EMBL/GenBank/DDBJ databases">
        <title>Complete sequence of Anaeromyxobacter dehalogenans 2CP-C.</title>
        <authorList>
            <person name="Copeland A."/>
            <person name="Lucas S."/>
            <person name="Lapidus A."/>
            <person name="Barry K."/>
            <person name="Detter J.C."/>
            <person name="Glavina T."/>
            <person name="Hammon N."/>
            <person name="Israni S."/>
            <person name="Pitluck S."/>
            <person name="Brettin T."/>
            <person name="Bruce D."/>
            <person name="Han C."/>
            <person name="Tapia R."/>
            <person name="Gilna P."/>
            <person name="Kiss H."/>
            <person name="Schmutz J."/>
            <person name="Larimer F."/>
            <person name="Land M."/>
            <person name="Kyrpides N."/>
            <person name="Anderson I."/>
            <person name="Sanford R.A."/>
            <person name="Ritalahti K.M."/>
            <person name="Thomas H.S."/>
            <person name="Kirby J.R."/>
            <person name="Zhulin I.B."/>
            <person name="Loeffler F.E."/>
            <person name="Richardson P."/>
        </authorList>
    </citation>
    <scope>NUCLEOTIDE SEQUENCE [LARGE SCALE GENOMIC DNA]</scope>
    <source>
        <strain>2CP-C</strain>
    </source>
</reference>
<protein>
    <recommendedName>
        <fullName evidence="1">Protein-glutamate methylesterase/protein-glutamine glutaminase 2</fullName>
        <ecNumber evidence="1">3.1.1.61</ecNumber>
        <ecNumber evidence="1">3.5.1.44</ecNumber>
    </recommendedName>
</protein>
<keyword id="KW-0145">Chemotaxis</keyword>
<keyword id="KW-0963">Cytoplasm</keyword>
<keyword id="KW-0378">Hydrolase</keyword>
<keyword id="KW-0597">Phosphoprotein</keyword>
<keyword id="KW-1185">Reference proteome</keyword>
<dbReference type="EC" id="3.1.1.61" evidence="1"/>
<dbReference type="EC" id="3.5.1.44" evidence="1"/>
<dbReference type="EMBL" id="CP000251">
    <property type="protein sequence ID" value="ABC80390.1"/>
    <property type="molecule type" value="Genomic_DNA"/>
</dbReference>
<dbReference type="RefSeq" id="WP_011419673.1">
    <property type="nucleotide sequence ID" value="NC_007760.1"/>
</dbReference>
<dbReference type="SMR" id="Q2INL1"/>
<dbReference type="STRING" id="290397.Adeh_0614"/>
<dbReference type="KEGG" id="ade:Adeh_0614"/>
<dbReference type="eggNOG" id="COG2201">
    <property type="taxonomic scope" value="Bacteria"/>
</dbReference>
<dbReference type="HOGENOM" id="CLU_000445_51_0_7"/>
<dbReference type="OrthoDB" id="9793421at2"/>
<dbReference type="Proteomes" id="UP000001935">
    <property type="component" value="Chromosome"/>
</dbReference>
<dbReference type="GO" id="GO:0005737">
    <property type="term" value="C:cytoplasm"/>
    <property type="evidence" value="ECO:0007669"/>
    <property type="project" value="UniProtKB-SubCell"/>
</dbReference>
<dbReference type="GO" id="GO:0000156">
    <property type="term" value="F:phosphorelay response regulator activity"/>
    <property type="evidence" value="ECO:0007669"/>
    <property type="project" value="InterPro"/>
</dbReference>
<dbReference type="GO" id="GO:0008984">
    <property type="term" value="F:protein-glutamate methylesterase activity"/>
    <property type="evidence" value="ECO:0007669"/>
    <property type="project" value="UniProtKB-UniRule"/>
</dbReference>
<dbReference type="GO" id="GO:0050568">
    <property type="term" value="F:protein-glutamine glutaminase activity"/>
    <property type="evidence" value="ECO:0007669"/>
    <property type="project" value="UniProtKB-UniRule"/>
</dbReference>
<dbReference type="GO" id="GO:0006935">
    <property type="term" value="P:chemotaxis"/>
    <property type="evidence" value="ECO:0007669"/>
    <property type="project" value="UniProtKB-UniRule"/>
</dbReference>
<dbReference type="CDD" id="cd16432">
    <property type="entry name" value="CheB_Rec"/>
    <property type="match status" value="1"/>
</dbReference>
<dbReference type="CDD" id="cd17541">
    <property type="entry name" value="REC_CheB-like"/>
    <property type="match status" value="1"/>
</dbReference>
<dbReference type="Gene3D" id="3.40.50.2300">
    <property type="match status" value="1"/>
</dbReference>
<dbReference type="Gene3D" id="3.40.50.180">
    <property type="entry name" value="Methylesterase CheB, C-terminal domain"/>
    <property type="match status" value="1"/>
</dbReference>
<dbReference type="HAMAP" id="MF_00099">
    <property type="entry name" value="CheB_chemtxs"/>
    <property type="match status" value="1"/>
</dbReference>
<dbReference type="InterPro" id="IPR008248">
    <property type="entry name" value="CheB-like"/>
</dbReference>
<dbReference type="InterPro" id="IPR035909">
    <property type="entry name" value="CheB_C"/>
</dbReference>
<dbReference type="InterPro" id="IPR011006">
    <property type="entry name" value="CheY-like_superfamily"/>
</dbReference>
<dbReference type="InterPro" id="IPR000673">
    <property type="entry name" value="Sig_transdc_resp-reg_Me-estase"/>
</dbReference>
<dbReference type="InterPro" id="IPR001789">
    <property type="entry name" value="Sig_transdc_resp-reg_receiver"/>
</dbReference>
<dbReference type="NCBIfam" id="NF001965">
    <property type="entry name" value="PRK00742.1"/>
    <property type="match status" value="1"/>
</dbReference>
<dbReference type="PANTHER" id="PTHR42872">
    <property type="entry name" value="PROTEIN-GLUTAMATE METHYLESTERASE/PROTEIN-GLUTAMINE GLUTAMINASE"/>
    <property type="match status" value="1"/>
</dbReference>
<dbReference type="PANTHER" id="PTHR42872:SF6">
    <property type="entry name" value="PROTEIN-GLUTAMATE METHYLESTERASE_PROTEIN-GLUTAMINE GLUTAMINASE"/>
    <property type="match status" value="1"/>
</dbReference>
<dbReference type="Pfam" id="PF01339">
    <property type="entry name" value="CheB_methylest"/>
    <property type="match status" value="1"/>
</dbReference>
<dbReference type="Pfam" id="PF00072">
    <property type="entry name" value="Response_reg"/>
    <property type="match status" value="1"/>
</dbReference>
<dbReference type="PIRSF" id="PIRSF000876">
    <property type="entry name" value="RR_chemtxs_CheB"/>
    <property type="match status" value="1"/>
</dbReference>
<dbReference type="SMART" id="SM00448">
    <property type="entry name" value="REC"/>
    <property type="match status" value="1"/>
</dbReference>
<dbReference type="SUPFAM" id="SSF52172">
    <property type="entry name" value="CheY-like"/>
    <property type="match status" value="1"/>
</dbReference>
<dbReference type="SUPFAM" id="SSF52738">
    <property type="entry name" value="Methylesterase CheB, C-terminal domain"/>
    <property type="match status" value="1"/>
</dbReference>
<dbReference type="PROSITE" id="PS50122">
    <property type="entry name" value="CHEB"/>
    <property type="match status" value="1"/>
</dbReference>
<dbReference type="PROSITE" id="PS50110">
    <property type="entry name" value="RESPONSE_REGULATORY"/>
    <property type="match status" value="1"/>
</dbReference>
<proteinExistence type="inferred from homology"/>
<evidence type="ECO:0000255" key="1">
    <source>
        <dbReference type="HAMAP-Rule" id="MF_00099"/>
    </source>
</evidence>
<sequence>MSLAGGDRPIRVLVADDSELFRELLARVVAAEPGFEVAAVAADGDAAAAMARALRPDVVTMDLHMPDADGYSGIARIMAETPTPILVLTANPTEAAGFRALSLGALDILEKPSATADLGEYGRLIRSRLRLLAGVKVIRHLRGLRERRDAAPARAARVEVVVIGASLGGPRALAAVLRGLPPDFPAPIAVVQHIADGFTAGLAGWLAQESRLDVREARHGDPLRAGRVLIAPSGRHLVLGEGVARLSDAPPVDTFRPSVTPLFTSAARQYGRRCCGVLLTGMGRDGAEGLRVIKDAGGPTLAQDEATSAVFGMARAAVELGAVDRVLPVDEIPRALRELTR</sequence>
<comment type="function">
    <text evidence="1">Involved in chemotaxis. Part of a chemotaxis signal transduction system that modulates chemotaxis in response to various stimuli. Catalyzes the demethylation of specific methylglutamate residues introduced into the chemoreceptors (methyl-accepting chemotaxis proteins or MCP) by CheR. Also mediates the irreversible deamidation of specific glutamine residues to glutamic acid.</text>
</comment>
<comment type="catalytic activity">
    <reaction evidence="1">
        <text>[protein]-L-glutamate 5-O-methyl ester + H2O = L-glutamyl-[protein] + methanol + H(+)</text>
        <dbReference type="Rhea" id="RHEA:23236"/>
        <dbReference type="Rhea" id="RHEA-COMP:10208"/>
        <dbReference type="Rhea" id="RHEA-COMP:10311"/>
        <dbReference type="ChEBI" id="CHEBI:15377"/>
        <dbReference type="ChEBI" id="CHEBI:15378"/>
        <dbReference type="ChEBI" id="CHEBI:17790"/>
        <dbReference type="ChEBI" id="CHEBI:29973"/>
        <dbReference type="ChEBI" id="CHEBI:82795"/>
        <dbReference type="EC" id="3.1.1.61"/>
    </reaction>
</comment>
<comment type="catalytic activity">
    <reaction evidence="1">
        <text>L-glutaminyl-[protein] + H2O = L-glutamyl-[protein] + NH4(+)</text>
        <dbReference type="Rhea" id="RHEA:16441"/>
        <dbReference type="Rhea" id="RHEA-COMP:10207"/>
        <dbReference type="Rhea" id="RHEA-COMP:10208"/>
        <dbReference type="ChEBI" id="CHEBI:15377"/>
        <dbReference type="ChEBI" id="CHEBI:28938"/>
        <dbReference type="ChEBI" id="CHEBI:29973"/>
        <dbReference type="ChEBI" id="CHEBI:30011"/>
        <dbReference type="EC" id="3.5.1.44"/>
    </reaction>
</comment>
<comment type="subcellular location">
    <subcellularLocation>
        <location evidence="1">Cytoplasm</location>
    </subcellularLocation>
</comment>
<comment type="domain">
    <text evidence="1">Contains a C-terminal catalytic domain, and an N-terminal region which modulates catalytic activity.</text>
</comment>
<comment type="PTM">
    <text evidence="1">Phosphorylated by CheA. Phosphorylation of the N-terminal regulatory domain activates the methylesterase activity.</text>
</comment>
<comment type="similarity">
    <text evidence="1">Belongs to the CheB family.</text>
</comment>
<accession>Q2INL1</accession>